<protein>
    <recommendedName>
        <fullName>Catalase-peroxidase 2</fullName>
        <shortName>CP 2</shortName>
        <ecNumber>1.11.1.21</ecNumber>
    </recommendedName>
    <alternativeName>
        <fullName>Peroxidase/catalase 2</fullName>
    </alternativeName>
</protein>
<accession>A6TV07</accession>
<comment type="function">
    <text evidence="1">Bifunctional enzyme with both catalase and broad-spectrum peroxidase activity.</text>
</comment>
<comment type="catalytic activity">
    <reaction>
        <text>H2O2 + AH2 = A + 2 H2O</text>
        <dbReference type="Rhea" id="RHEA:30275"/>
        <dbReference type="ChEBI" id="CHEBI:13193"/>
        <dbReference type="ChEBI" id="CHEBI:15377"/>
        <dbReference type="ChEBI" id="CHEBI:16240"/>
        <dbReference type="ChEBI" id="CHEBI:17499"/>
        <dbReference type="EC" id="1.11.1.21"/>
    </reaction>
</comment>
<comment type="catalytic activity">
    <reaction>
        <text>2 H2O2 = O2 + 2 H2O</text>
        <dbReference type="Rhea" id="RHEA:20309"/>
        <dbReference type="ChEBI" id="CHEBI:15377"/>
        <dbReference type="ChEBI" id="CHEBI:15379"/>
        <dbReference type="ChEBI" id="CHEBI:16240"/>
        <dbReference type="EC" id="1.11.1.21"/>
    </reaction>
</comment>
<comment type="cofactor">
    <cofactor evidence="1">
        <name>heme b</name>
        <dbReference type="ChEBI" id="CHEBI:60344"/>
    </cofactor>
    <text evidence="1">Binds 1 heme b (iron(II)-protoporphyrin IX) group per dimer.</text>
</comment>
<comment type="subunit">
    <text evidence="1">Homodimer or homotetramer.</text>
</comment>
<comment type="PTM">
    <text evidence="1">Formation of the three residue Trp-Tyr-Met cross-link is important for the catalase, but not the peroxidase activity of the enzyme.</text>
</comment>
<comment type="similarity">
    <text evidence="3">Belongs to the peroxidase family. Peroxidase/catalase subfamily.</text>
</comment>
<comment type="caution">
    <text evidence="3">Could be the product of a pseudogene. The N-terminus is much shorter than in related proteins and lacks the active sites and the heme-binding sites. Moreover, the 71 first amino acids of this sequence are not homologous to other KatG sequences.</text>
</comment>
<proteinExistence type="uncertain"/>
<reference key="1">
    <citation type="journal article" date="2016" name="Genome Announc.">
        <title>Complete genome sequence of Alkaliphilus metalliredigens strain QYMF, an alkaliphilic and metal-reducing bacterium isolated from borax-contaminated leachate ponds.</title>
        <authorList>
            <person name="Hwang C."/>
            <person name="Copeland A."/>
            <person name="Lucas S."/>
            <person name="Lapidus A."/>
            <person name="Barry K."/>
            <person name="Detter J.C."/>
            <person name="Glavina Del Rio T."/>
            <person name="Hammon N."/>
            <person name="Israni S."/>
            <person name="Dalin E."/>
            <person name="Tice H."/>
            <person name="Pitluck S."/>
            <person name="Chertkov O."/>
            <person name="Brettin T."/>
            <person name="Bruce D."/>
            <person name="Han C."/>
            <person name="Schmutz J."/>
            <person name="Larimer F."/>
            <person name="Land M.L."/>
            <person name="Hauser L."/>
            <person name="Kyrpides N."/>
            <person name="Mikhailova N."/>
            <person name="Ye Q."/>
            <person name="Zhou J."/>
            <person name="Richardson P."/>
            <person name="Fields M.W."/>
        </authorList>
    </citation>
    <scope>NUCLEOTIDE SEQUENCE [LARGE SCALE GENOMIC DNA]</scope>
    <source>
        <strain>QYMF</strain>
    </source>
</reference>
<evidence type="ECO:0000250" key="1"/>
<evidence type="ECO:0000255" key="2"/>
<evidence type="ECO:0000305" key="3"/>
<dbReference type="EC" id="1.11.1.21"/>
<dbReference type="EMBL" id="CP000724">
    <property type="protein sequence ID" value="ABR50025.1"/>
    <property type="molecule type" value="Genomic_DNA"/>
</dbReference>
<dbReference type="RefSeq" id="WP_012064979.1">
    <property type="nucleotide sequence ID" value="NC_009633.1"/>
</dbReference>
<dbReference type="SMR" id="A6TV07"/>
<dbReference type="STRING" id="293826.Amet_3934"/>
<dbReference type="PeroxiBase" id="3625">
    <property type="entry name" value="AmeCP02_QYMF"/>
</dbReference>
<dbReference type="KEGG" id="amt:Amet_3934"/>
<dbReference type="eggNOG" id="COG0376">
    <property type="taxonomic scope" value="Bacteria"/>
</dbReference>
<dbReference type="HOGENOM" id="CLU_025424_3_0_9"/>
<dbReference type="OrthoDB" id="9759743at2"/>
<dbReference type="Proteomes" id="UP000001572">
    <property type="component" value="Chromosome"/>
</dbReference>
<dbReference type="GO" id="GO:0005829">
    <property type="term" value="C:cytosol"/>
    <property type="evidence" value="ECO:0007669"/>
    <property type="project" value="TreeGrafter"/>
</dbReference>
<dbReference type="GO" id="GO:0004096">
    <property type="term" value="F:catalase activity"/>
    <property type="evidence" value="ECO:0007669"/>
    <property type="project" value="InterPro"/>
</dbReference>
<dbReference type="GO" id="GO:0020037">
    <property type="term" value="F:heme binding"/>
    <property type="evidence" value="ECO:0007669"/>
    <property type="project" value="InterPro"/>
</dbReference>
<dbReference type="GO" id="GO:0046872">
    <property type="term" value="F:metal ion binding"/>
    <property type="evidence" value="ECO:0007669"/>
    <property type="project" value="UniProtKB-KW"/>
</dbReference>
<dbReference type="GO" id="GO:0070301">
    <property type="term" value="P:cellular response to hydrogen peroxide"/>
    <property type="evidence" value="ECO:0007669"/>
    <property type="project" value="TreeGrafter"/>
</dbReference>
<dbReference type="GO" id="GO:0042744">
    <property type="term" value="P:hydrogen peroxide catabolic process"/>
    <property type="evidence" value="ECO:0007669"/>
    <property type="project" value="UniProtKB-KW"/>
</dbReference>
<dbReference type="CDD" id="cd08200">
    <property type="entry name" value="catalase_peroxidase_2"/>
    <property type="match status" value="1"/>
</dbReference>
<dbReference type="FunFam" id="1.10.420.10:FF:000004">
    <property type="entry name" value="Catalase-peroxidase"/>
    <property type="match status" value="1"/>
</dbReference>
<dbReference type="Gene3D" id="1.10.520.10">
    <property type="match status" value="2"/>
</dbReference>
<dbReference type="Gene3D" id="1.10.420.10">
    <property type="entry name" value="Peroxidase, domain 2"/>
    <property type="match status" value="1"/>
</dbReference>
<dbReference type="InterPro" id="IPR000763">
    <property type="entry name" value="Catalase_peroxidase"/>
</dbReference>
<dbReference type="InterPro" id="IPR002016">
    <property type="entry name" value="Haem_peroxidase"/>
</dbReference>
<dbReference type="InterPro" id="IPR010255">
    <property type="entry name" value="Haem_peroxidase_sf"/>
</dbReference>
<dbReference type="PANTHER" id="PTHR30555:SF6">
    <property type="entry name" value="CATALASE-PEROXIDASE"/>
    <property type="match status" value="1"/>
</dbReference>
<dbReference type="PANTHER" id="PTHR30555">
    <property type="entry name" value="HYDROPEROXIDASE I, BIFUNCTIONAL CATALASE-PEROXIDASE"/>
    <property type="match status" value="1"/>
</dbReference>
<dbReference type="Pfam" id="PF00141">
    <property type="entry name" value="peroxidase"/>
    <property type="match status" value="1"/>
</dbReference>
<dbReference type="SUPFAM" id="SSF48113">
    <property type="entry name" value="Heme-dependent peroxidases"/>
    <property type="match status" value="2"/>
</dbReference>
<keyword id="KW-0349">Heme</keyword>
<keyword id="KW-0376">Hydrogen peroxide</keyword>
<keyword id="KW-0408">Iron</keyword>
<keyword id="KW-0479">Metal-binding</keyword>
<keyword id="KW-0560">Oxidoreductase</keyword>
<keyword id="KW-0575">Peroxidase</keyword>
<keyword id="KW-1185">Reference proteome</keyword>
<keyword id="KW-0732">Signal</keyword>
<gene>
    <name type="primary">katG2</name>
    <name type="ordered locus">Amet_3934</name>
</gene>
<name>KATG2_ALKMQ</name>
<sequence length="416" mass="46834">MLLPLIVFLLSVLIHHRIYSSFFLHFYSPQYYMICSRLTLLSSCSWHDFHLKLILLEFASQSTNPVPALHNDPTYEKISRRFHENPEAFADVFARAWFKLLHRDMGPQTRYLGPEVPEEELIWQDPIPAVDYELTDAEIAELKAKILDSGLTVSDLVTTAWASASTFRGSDMRGGANGARIRLAPQKDWEVNQPEQLTKVLTVLEDIQNQLDKKVSIADLIVLGGSAAIEKSAQDAGFDVTVPFALGRGDATQEQTDIESFEVLEPISDGFRNYQKKQYSVSAEELLLDKAQLLNLTAPEMTVLVDGMRVLGTNYNGTQHGVFTDRVGTLTNDFFVNLLDMGVEWKPMDGGLYEARNRKTGEVVRTATRVDLVFGSNSVLRALVEVYAQDDNKEKFVGDFIAAWIKVMNADRFDLD</sequence>
<organism>
    <name type="scientific">Alkaliphilus metalliredigens (strain QYMF)</name>
    <dbReference type="NCBI Taxonomy" id="293826"/>
    <lineage>
        <taxon>Bacteria</taxon>
        <taxon>Bacillati</taxon>
        <taxon>Bacillota</taxon>
        <taxon>Clostridia</taxon>
        <taxon>Peptostreptococcales</taxon>
        <taxon>Natronincolaceae</taxon>
        <taxon>Alkaliphilus</taxon>
    </lineage>
</organism>
<feature type="signal peptide" evidence="2">
    <location>
        <begin position="1"/>
        <end position="20"/>
    </location>
</feature>
<feature type="chain" id="PRO_0000354719" description="Catalase-peroxidase 2">
    <location>
        <begin position="21"/>
        <end position="416"/>
    </location>
</feature>